<name>GPDA_FUSNN</name>
<organism>
    <name type="scientific">Fusobacterium nucleatum subsp. nucleatum (strain ATCC 25586 / DSM 15643 / BCRC 10681 / CIP 101130 / JCM 8532 / KCTC 2640 / LMG 13131 / VPI 4355)</name>
    <dbReference type="NCBI Taxonomy" id="190304"/>
    <lineage>
        <taxon>Bacteria</taxon>
        <taxon>Fusobacteriati</taxon>
        <taxon>Fusobacteriota</taxon>
        <taxon>Fusobacteriia</taxon>
        <taxon>Fusobacteriales</taxon>
        <taxon>Fusobacteriaceae</taxon>
        <taxon>Fusobacterium</taxon>
    </lineage>
</organism>
<keyword id="KW-0963">Cytoplasm</keyword>
<keyword id="KW-0444">Lipid biosynthesis</keyword>
<keyword id="KW-0443">Lipid metabolism</keyword>
<keyword id="KW-0520">NAD</keyword>
<keyword id="KW-0521">NADP</keyword>
<keyword id="KW-0547">Nucleotide-binding</keyword>
<keyword id="KW-0560">Oxidoreductase</keyword>
<keyword id="KW-0594">Phospholipid biosynthesis</keyword>
<keyword id="KW-1208">Phospholipid metabolism</keyword>
<keyword id="KW-1185">Reference proteome</keyword>
<gene>
    <name evidence="1" type="primary">gpsA</name>
    <name type="ordered locus">FN0906</name>
</gene>
<reference key="1">
    <citation type="journal article" date="2002" name="J. Bacteriol.">
        <title>Genome sequence and analysis of the oral bacterium Fusobacterium nucleatum strain ATCC 25586.</title>
        <authorList>
            <person name="Kapatral V."/>
            <person name="Anderson I."/>
            <person name="Ivanova N."/>
            <person name="Reznik G."/>
            <person name="Los T."/>
            <person name="Lykidis A."/>
            <person name="Bhattacharyya A."/>
            <person name="Bartman A."/>
            <person name="Gardner W."/>
            <person name="Grechkin G."/>
            <person name="Zhu L."/>
            <person name="Vasieva O."/>
            <person name="Chu L."/>
            <person name="Kogan Y."/>
            <person name="Chaga O."/>
            <person name="Goltsman E."/>
            <person name="Bernal A."/>
            <person name="Larsen N."/>
            <person name="D'Souza M."/>
            <person name="Walunas T."/>
            <person name="Pusch G."/>
            <person name="Haselkorn R."/>
            <person name="Fonstein M."/>
            <person name="Kyrpides N.C."/>
            <person name="Overbeek R."/>
        </authorList>
    </citation>
    <scope>NUCLEOTIDE SEQUENCE [LARGE SCALE GENOMIC DNA]</scope>
    <source>
        <strain>ATCC 25586 / DSM 15643 / BCRC 10681 / CIP 101130 / JCM 8532 / KCTC 2640 / LMG 13131 / VPI 4355</strain>
    </source>
</reference>
<proteinExistence type="inferred from homology"/>
<dbReference type="EC" id="1.1.1.94" evidence="1"/>
<dbReference type="EMBL" id="AE009951">
    <property type="protein sequence ID" value="AAL95102.1"/>
    <property type="molecule type" value="Genomic_DNA"/>
</dbReference>
<dbReference type="RefSeq" id="NP_603803.1">
    <property type="nucleotide sequence ID" value="NC_003454.1"/>
</dbReference>
<dbReference type="RefSeq" id="WP_011016741.1">
    <property type="nucleotide sequence ID" value="NZ_OZ209243.1"/>
</dbReference>
<dbReference type="SMR" id="Q8RF18"/>
<dbReference type="FunCoup" id="Q8RF18">
    <property type="interactions" value="305"/>
</dbReference>
<dbReference type="STRING" id="190304.FN0906"/>
<dbReference type="PaxDb" id="190304-FN0906"/>
<dbReference type="EnsemblBacteria" id="AAL95102">
    <property type="protein sequence ID" value="AAL95102"/>
    <property type="gene ID" value="FN0906"/>
</dbReference>
<dbReference type="KEGG" id="fnu:FN0906"/>
<dbReference type="PATRIC" id="fig|190304.8.peg.1469"/>
<dbReference type="eggNOG" id="COG0240">
    <property type="taxonomic scope" value="Bacteria"/>
</dbReference>
<dbReference type="HOGENOM" id="CLU_033449_0_2_0"/>
<dbReference type="InParanoid" id="Q8RF18"/>
<dbReference type="BioCyc" id="FNUC190304:G1FZS-1488-MONOMER"/>
<dbReference type="UniPathway" id="UPA00940"/>
<dbReference type="Proteomes" id="UP000002521">
    <property type="component" value="Chromosome"/>
</dbReference>
<dbReference type="GO" id="GO:0005829">
    <property type="term" value="C:cytosol"/>
    <property type="evidence" value="ECO:0000318"/>
    <property type="project" value="GO_Central"/>
</dbReference>
<dbReference type="GO" id="GO:0047952">
    <property type="term" value="F:glycerol-3-phosphate dehydrogenase [NAD(P)+] activity"/>
    <property type="evidence" value="ECO:0000318"/>
    <property type="project" value="GO_Central"/>
</dbReference>
<dbReference type="GO" id="GO:0051287">
    <property type="term" value="F:NAD binding"/>
    <property type="evidence" value="ECO:0007669"/>
    <property type="project" value="InterPro"/>
</dbReference>
<dbReference type="GO" id="GO:0005975">
    <property type="term" value="P:carbohydrate metabolic process"/>
    <property type="evidence" value="ECO:0007669"/>
    <property type="project" value="InterPro"/>
</dbReference>
<dbReference type="GO" id="GO:0046167">
    <property type="term" value="P:glycerol-3-phosphate biosynthetic process"/>
    <property type="evidence" value="ECO:0007669"/>
    <property type="project" value="UniProtKB-UniRule"/>
</dbReference>
<dbReference type="GO" id="GO:0046168">
    <property type="term" value="P:glycerol-3-phosphate catabolic process"/>
    <property type="evidence" value="ECO:0007669"/>
    <property type="project" value="InterPro"/>
</dbReference>
<dbReference type="GO" id="GO:0006072">
    <property type="term" value="P:glycerol-3-phosphate metabolic process"/>
    <property type="evidence" value="ECO:0000318"/>
    <property type="project" value="GO_Central"/>
</dbReference>
<dbReference type="GO" id="GO:0006650">
    <property type="term" value="P:glycerophospholipid metabolic process"/>
    <property type="evidence" value="ECO:0007669"/>
    <property type="project" value="UniProtKB-UniRule"/>
</dbReference>
<dbReference type="GO" id="GO:0008654">
    <property type="term" value="P:phospholipid biosynthetic process"/>
    <property type="evidence" value="ECO:0007669"/>
    <property type="project" value="UniProtKB-KW"/>
</dbReference>
<dbReference type="FunFam" id="1.10.1040.10:FF:000001">
    <property type="entry name" value="Glycerol-3-phosphate dehydrogenase [NAD(P)+]"/>
    <property type="match status" value="1"/>
</dbReference>
<dbReference type="FunFam" id="3.40.50.720:FF:000019">
    <property type="entry name" value="Glycerol-3-phosphate dehydrogenase [NAD(P)+]"/>
    <property type="match status" value="1"/>
</dbReference>
<dbReference type="Gene3D" id="1.10.1040.10">
    <property type="entry name" value="N-(1-d-carboxylethyl)-l-norvaline Dehydrogenase, domain 2"/>
    <property type="match status" value="1"/>
</dbReference>
<dbReference type="Gene3D" id="3.40.50.720">
    <property type="entry name" value="NAD(P)-binding Rossmann-like Domain"/>
    <property type="match status" value="1"/>
</dbReference>
<dbReference type="HAMAP" id="MF_00394">
    <property type="entry name" value="NAD_Glyc3P_dehydrog"/>
    <property type="match status" value="1"/>
</dbReference>
<dbReference type="InterPro" id="IPR008927">
    <property type="entry name" value="6-PGluconate_DH-like_C_sf"/>
</dbReference>
<dbReference type="InterPro" id="IPR013328">
    <property type="entry name" value="6PGD_dom2"/>
</dbReference>
<dbReference type="InterPro" id="IPR006168">
    <property type="entry name" value="G3P_DH_NAD-dep"/>
</dbReference>
<dbReference type="InterPro" id="IPR006109">
    <property type="entry name" value="G3P_DH_NAD-dep_C"/>
</dbReference>
<dbReference type="InterPro" id="IPR011128">
    <property type="entry name" value="G3P_DH_NAD-dep_N"/>
</dbReference>
<dbReference type="InterPro" id="IPR036291">
    <property type="entry name" value="NAD(P)-bd_dom_sf"/>
</dbReference>
<dbReference type="NCBIfam" id="NF000940">
    <property type="entry name" value="PRK00094.1-2"/>
    <property type="match status" value="1"/>
</dbReference>
<dbReference type="NCBIfam" id="NF000941">
    <property type="entry name" value="PRK00094.1-3"/>
    <property type="match status" value="1"/>
</dbReference>
<dbReference type="NCBIfam" id="NF000942">
    <property type="entry name" value="PRK00094.1-4"/>
    <property type="match status" value="1"/>
</dbReference>
<dbReference type="PANTHER" id="PTHR11728">
    <property type="entry name" value="GLYCEROL-3-PHOSPHATE DEHYDROGENASE"/>
    <property type="match status" value="1"/>
</dbReference>
<dbReference type="PANTHER" id="PTHR11728:SF1">
    <property type="entry name" value="GLYCEROL-3-PHOSPHATE DEHYDROGENASE [NAD(+)] 2, CHLOROPLASTIC"/>
    <property type="match status" value="1"/>
</dbReference>
<dbReference type="Pfam" id="PF07479">
    <property type="entry name" value="NAD_Gly3P_dh_C"/>
    <property type="match status" value="1"/>
</dbReference>
<dbReference type="Pfam" id="PF01210">
    <property type="entry name" value="NAD_Gly3P_dh_N"/>
    <property type="match status" value="1"/>
</dbReference>
<dbReference type="PIRSF" id="PIRSF000114">
    <property type="entry name" value="Glycerol-3-P_dh"/>
    <property type="match status" value="1"/>
</dbReference>
<dbReference type="PRINTS" id="PR00077">
    <property type="entry name" value="GPDHDRGNASE"/>
</dbReference>
<dbReference type="SUPFAM" id="SSF48179">
    <property type="entry name" value="6-phosphogluconate dehydrogenase C-terminal domain-like"/>
    <property type="match status" value="1"/>
</dbReference>
<dbReference type="SUPFAM" id="SSF51735">
    <property type="entry name" value="NAD(P)-binding Rossmann-fold domains"/>
    <property type="match status" value="1"/>
</dbReference>
<dbReference type="PROSITE" id="PS00957">
    <property type="entry name" value="NAD_G3PDH"/>
    <property type="match status" value="1"/>
</dbReference>
<feature type="chain" id="PRO_0000137964" description="Glycerol-3-phosphate dehydrogenase [NAD(P)+]">
    <location>
        <begin position="1"/>
        <end position="335"/>
    </location>
</feature>
<feature type="active site" description="Proton acceptor" evidence="1">
    <location>
        <position position="191"/>
    </location>
</feature>
<feature type="binding site" evidence="1">
    <location>
        <position position="12"/>
    </location>
    <ligand>
        <name>NADPH</name>
        <dbReference type="ChEBI" id="CHEBI:57783"/>
    </ligand>
</feature>
<feature type="binding site" evidence="1">
    <location>
        <position position="106"/>
    </location>
    <ligand>
        <name>NADPH</name>
        <dbReference type="ChEBI" id="CHEBI:57783"/>
    </ligand>
</feature>
<feature type="binding site" evidence="1">
    <location>
        <position position="106"/>
    </location>
    <ligand>
        <name>sn-glycerol 3-phosphate</name>
        <dbReference type="ChEBI" id="CHEBI:57597"/>
    </ligand>
</feature>
<feature type="binding site" evidence="1">
    <location>
        <position position="136"/>
    </location>
    <ligand>
        <name>sn-glycerol 3-phosphate</name>
        <dbReference type="ChEBI" id="CHEBI:57597"/>
    </ligand>
</feature>
<feature type="binding site" evidence="1">
    <location>
        <position position="138"/>
    </location>
    <ligand>
        <name>sn-glycerol 3-phosphate</name>
        <dbReference type="ChEBI" id="CHEBI:57597"/>
    </ligand>
</feature>
<feature type="binding site" evidence="1">
    <location>
        <position position="140"/>
    </location>
    <ligand>
        <name>NADPH</name>
        <dbReference type="ChEBI" id="CHEBI:57783"/>
    </ligand>
</feature>
<feature type="binding site" evidence="1">
    <location>
        <position position="191"/>
    </location>
    <ligand>
        <name>sn-glycerol 3-phosphate</name>
        <dbReference type="ChEBI" id="CHEBI:57597"/>
    </ligand>
</feature>
<feature type="binding site" evidence="1">
    <location>
        <position position="244"/>
    </location>
    <ligand>
        <name>sn-glycerol 3-phosphate</name>
        <dbReference type="ChEBI" id="CHEBI:57597"/>
    </ligand>
</feature>
<feature type="binding site" evidence="1">
    <location>
        <position position="254"/>
    </location>
    <ligand>
        <name>sn-glycerol 3-phosphate</name>
        <dbReference type="ChEBI" id="CHEBI:57597"/>
    </ligand>
</feature>
<feature type="binding site" evidence="1">
    <location>
        <position position="255"/>
    </location>
    <ligand>
        <name>NADPH</name>
        <dbReference type="ChEBI" id="CHEBI:57783"/>
    </ligand>
</feature>
<feature type="binding site" evidence="1">
    <location>
        <position position="255"/>
    </location>
    <ligand>
        <name>sn-glycerol 3-phosphate</name>
        <dbReference type="ChEBI" id="CHEBI:57597"/>
    </ligand>
</feature>
<feature type="binding site" evidence="1">
    <location>
        <position position="256"/>
    </location>
    <ligand>
        <name>sn-glycerol 3-phosphate</name>
        <dbReference type="ChEBI" id="CHEBI:57597"/>
    </ligand>
</feature>
<feature type="binding site" evidence="1">
    <location>
        <position position="279"/>
    </location>
    <ligand>
        <name>NADPH</name>
        <dbReference type="ChEBI" id="CHEBI:57783"/>
    </ligand>
</feature>
<feature type="binding site" evidence="1">
    <location>
        <position position="281"/>
    </location>
    <ligand>
        <name>NADPH</name>
        <dbReference type="ChEBI" id="CHEBI:57783"/>
    </ligand>
</feature>
<accession>Q8RF18</accession>
<evidence type="ECO:0000255" key="1">
    <source>
        <dbReference type="HAMAP-Rule" id="MF_00394"/>
    </source>
</evidence>
<comment type="function">
    <text evidence="1">Catalyzes the reduction of the glycolytic intermediate dihydroxyacetone phosphate (DHAP) to sn-glycerol 3-phosphate (G3P), the key precursor for phospholipid synthesis.</text>
</comment>
<comment type="catalytic activity">
    <reaction evidence="1">
        <text>sn-glycerol 3-phosphate + NAD(+) = dihydroxyacetone phosphate + NADH + H(+)</text>
        <dbReference type="Rhea" id="RHEA:11092"/>
        <dbReference type="ChEBI" id="CHEBI:15378"/>
        <dbReference type="ChEBI" id="CHEBI:57540"/>
        <dbReference type="ChEBI" id="CHEBI:57597"/>
        <dbReference type="ChEBI" id="CHEBI:57642"/>
        <dbReference type="ChEBI" id="CHEBI:57945"/>
        <dbReference type="EC" id="1.1.1.94"/>
    </reaction>
    <physiologicalReaction direction="right-to-left" evidence="1">
        <dbReference type="Rhea" id="RHEA:11094"/>
    </physiologicalReaction>
</comment>
<comment type="catalytic activity">
    <reaction evidence="1">
        <text>sn-glycerol 3-phosphate + NADP(+) = dihydroxyacetone phosphate + NADPH + H(+)</text>
        <dbReference type="Rhea" id="RHEA:11096"/>
        <dbReference type="ChEBI" id="CHEBI:15378"/>
        <dbReference type="ChEBI" id="CHEBI:57597"/>
        <dbReference type="ChEBI" id="CHEBI:57642"/>
        <dbReference type="ChEBI" id="CHEBI:57783"/>
        <dbReference type="ChEBI" id="CHEBI:58349"/>
        <dbReference type="EC" id="1.1.1.94"/>
    </reaction>
    <physiologicalReaction direction="right-to-left" evidence="1">
        <dbReference type="Rhea" id="RHEA:11098"/>
    </physiologicalReaction>
</comment>
<comment type="pathway">
    <text evidence="1">Membrane lipid metabolism; glycerophospholipid metabolism.</text>
</comment>
<comment type="subcellular location">
    <subcellularLocation>
        <location evidence="1">Cytoplasm</location>
    </subcellularLocation>
</comment>
<comment type="similarity">
    <text evidence="1">Belongs to the NAD-dependent glycerol-3-phosphate dehydrogenase family.</text>
</comment>
<sequence length="335" mass="36370">MVKISVIGSGGWGIALAILLHKNGHNLTIWSFDKKEAEELKINRQNKTKLPNILLPEDIKVTDNLKEAVDNKDILVLAVPSKAIRSVSKSLKDIIKDNQIIVNVAKGLEEDTLKTMTDIIEEELKEKNPQVAVLSGPSHAEEVGKGIPTTCVVSAHNKELTLYLQNIFMNPSFRVYTSPDMIGVEIGGALKNVIALAAGIADGLNYGDNTKAALITRGIKEISSLGVAMGGEQSTFYGLTGLGDLIVTCASMHSRNRRAGILLGQGKTLDEAIKEVNMVVEGIYSAKSALMAAKKYNVEIPIIEQVNAVLFENKNAAEAVNELMIRDKKLEIQSW</sequence>
<protein>
    <recommendedName>
        <fullName evidence="1">Glycerol-3-phosphate dehydrogenase [NAD(P)+]</fullName>
        <ecNumber evidence="1">1.1.1.94</ecNumber>
    </recommendedName>
    <alternativeName>
        <fullName evidence="1">NAD(P)(+)-dependent glycerol-3-phosphate dehydrogenase</fullName>
    </alternativeName>
    <alternativeName>
        <fullName evidence="1">NAD(P)H-dependent dihydroxyacetone-phosphate reductase</fullName>
    </alternativeName>
</protein>